<reference key="1">
    <citation type="journal article" date="2006" name="J. Bacteriol.">
        <title>Comparison of the genome sequence of the poultry pathogen Bordetella avium with those of B. bronchiseptica, B. pertussis, and B. parapertussis reveals extensive diversity in surface structures associated with host interaction.</title>
        <authorList>
            <person name="Sebaihia M."/>
            <person name="Preston A."/>
            <person name="Maskell D.J."/>
            <person name="Kuzmiak H."/>
            <person name="Connell T.D."/>
            <person name="King N.D."/>
            <person name="Orndorff P.E."/>
            <person name="Miyamoto D.M."/>
            <person name="Thomson N.R."/>
            <person name="Harris D."/>
            <person name="Goble A."/>
            <person name="Lord A."/>
            <person name="Murphy L."/>
            <person name="Quail M.A."/>
            <person name="Rutter S."/>
            <person name="Squares R."/>
            <person name="Squares S."/>
            <person name="Woodward J."/>
            <person name="Parkhill J."/>
            <person name="Temple L.M."/>
        </authorList>
    </citation>
    <scope>NUCLEOTIDE SEQUENCE [LARGE SCALE GENOMIC DNA]</scope>
    <source>
        <strain>197N</strain>
    </source>
</reference>
<name>IHFA_BORA1</name>
<comment type="function">
    <text evidence="1">This protein is one of the two subunits of integration host factor, a specific DNA-binding protein that functions in genetic recombination as well as in transcriptional and translational control.</text>
</comment>
<comment type="subunit">
    <text evidence="1">Heterodimer of an alpha and a beta chain.</text>
</comment>
<comment type="similarity">
    <text evidence="1">Belongs to the bacterial histone-like protein family.</text>
</comment>
<proteinExistence type="inferred from homology"/>
<dbReference type="EMBL" id="AM167904">
    <property type="protein sequence ID" value="CAJ49675.1"/>
    <property type="molecule type" value="Genomic_DNA"/>
</dbReference>
<dbReference type="RefSeq" id="WP_012417732.1">
    <property type="nucleotide sequence ID" value="NC_010645.1"/>
</dbReference>
<dbReference type="SMR" id="Q2KZM3"/>
<dbReference type="STRING" id="360910.BAV2065"/>
<dbReference type="GeneID" id="92934876"/>
<dbReference type="KEGG" id="bav:BAV2065"/>
<dbReference type="eggNOG" id="COG0776">
    <property type="taxonomic scope" value="Bacteria"/>
</dbReference>
<dbReference type="HOGENOM" id="CLU_105066_1_0_4"/>
<dbReference type="OrthoDB" id="9797747at2"/>
<dbReference type="Proteomes" id="UP000001977">
    <property type="component" value="Chromosome"/>
</dbReference>
<dbReference type="GO" id="GO:0005829">
    <property type="term" value="C:cytosol"/>
    <property type="evidence" value="ECO:0007669"/>
    <property type="project" value="TreeGrafter"/>
</dbReference>
<dbReference type="GO" id="GO:0003677">
    <property type="term" value="F:DNA binding"/>
    <property type="evidence" value="ECO:0007669"/>
    <property type="project" value="UniProtKB-UniRule"/>
</dbReference>
<dbReference type="GO" id="GO:0030527">
    <property type="term" value="F:structural constituent of chromatin"/>
    <property type="evidence" value="ECO:0007669"/>
    <property type="project" value="InterPro"/>
</dbReference>
<dbReference type="GO" id="GO:0006310">
    <property type="term" value="P:DNA recombination"/>
    <property type="evidence" value="ECO:0007669"/>
    <property type="project" value="UniProtKB-UniRule"/>
</dbReference>
<dbReference type="GO" id="GO:0009893">
    <property type="term" value="P:positive regulation of metabolic process"/>
    <property type="evidence" value="ECO:0007669"/>
    <property type="project" value="UniProtKB-ARBA"/>
</dbReference>
<dbReference type="GO" id="GO:0006355">
    <property type="term" value="P:regulation of DNA-templated transcription"/>
    <property type="evidence" value="ECO:0007669"/>
    <property type="project" value="UniProtKB-UniRule"/>
</dbReference>
<dbReference type="GO" id="GO:0006417">
    <property type="term" value="P:regulation of translation"/>
    <property type="evidence" value="ECO:0007669"/>
    <property type="project" value="UniProtKB-UniRule"/>
</dbReference>
<dbReference type="CDD" id="cd13835">
    <property type="entry name" value="IHF_A"/>
    <property type="match status" value="1"/>
</dbReference>
<dbReference type="FunFam" id="4.10.520.10:FF:000002">
    <property type="entry name" value="Integration host factor subunit alpha"/>
    <property type="match status" value="1"/>
</dbReference>
<dbReference type="Gene3D" id="4.10.520.10">
    <property type="entry name" value="IHF-like DNA-binding proteins"/>
    <property type="match status" value="1"/>
</dbReference>
<dbReference type="HAMAP" id="MF_00380">
    <property type="entry name" value="IHF_alpha"/>
    <property type="match status" value="1"/>
</dbReference>
<dbReference type="InterPro" id="IPR000119">
    <property type="entry name" value="Hist_DNA-bd"/>
</dbReference>
<dbReference type="InterPro" id="IPR020816">
    <property type="entry name" value="Histone-like_DNA-bd_CS"/>
</dbReference>
<dbReference type="InterPro" id="IPR010992">
    <property type="entry name" value="IHF-like_DNA-bd_dom_sf"/>
</dbReference>
<dbReference type="InterPro" id="IPR005684">
    <property type="entry name" value="IHF_alpha"/>
</dbReference>
<dbReference type="NCBIfam" id="TIGR00987">
    <property type="entry name" value="himA"/>
    <property type="match status" value="1"/>
</dbReference>
<dbReference type="NCBIfam" id="NF001401">
    <property type="entry name" value="PRK00285.1"/>
    <property type="match status" value="1"/>
</dbReference>
<dbReference type="PANTHER" id="PTHR33175">
    <property type="entry name" value="DNA-BINDING PROTEIN HU"/>
    <property type="match status" value="1"/>
</dbReference>
<dbReference type="PANTHER" id="PTHR33175:SF2">
    <property type="entry name" value="INTEGRATION HOST FACTOR SUBUNIT ALPHA"/>
    <property type="match status" value="1"/>
</dbReference>
<dbReference type="Pfam" id="PF00216">
    <property type="entry name" value="Bac_DNA_binding"/>
    <property type="match status" value="1"/>
</dbReference>
<dbReference type="PRINTS" id="PR01727">
    <property type="entry name" value="DNABINDINGHU"/>
</dbReference>
<dbReference type="SMART" id="SM00411">
    <property type="entry name" value="BHL"/>
    <property type="match status" value="1"/>
</dbReference>
<dbReference type="SUPFAM" id="SSF47729">
    <property type="entry name" value="IHF-like DNA-binding proteins"/>
    <property type="match status" value="1"/>
</dbReference>
<dbReference type="PROSITE" id="PS00045">
    <property type="entry name" value="HISTONE_LIKE"/>
    <property type="match status" value="1"/>
</dbReference>
<organism>
    <name type="scientific">Bordetella avium (strain 197N)</name>
    <dbReference type="NCBI Taxonomy" id="360910"/>
    <lineage>
        <taxon>Bacteria</taxon>
        <taxon>Pseudomonadati</taxon>
        <taxon>Pseudomonadota</taxon>
        <taxon>Betaproteobacteria</taxon>
        <taxon>Burkholderiales</taxon>
        <taxon>Alcaligenaceae</taxon>
        <taxon>Bordetella</taxon>
    </lineage>
</organism>
<accession>Q2KZM3</accession>
<sequence>MGNAMLAEPRTLTKAELAELLFERVGLNKREAKDIVDTFFEEIREALARGDSVKLSGFGNFQVRDKPPRPGRNPKTGETIPIAARRVVTFHASQKLKSTVEQSGNPAEVSDDEAAE</sequence>
<feature type="chain" id="PRO_0000277714" description="Integration host factor subunit alpha">
    <location>
        <begin position="1"/>
        <end position="116"/>
    </location>
</feature>
<feature type="region of interest" description="Disordered" evidence="2">
    <location>
        <begin position="58"/>
        <end position="80"/>
    </location>
</feature>
<feature type="region of interest" description="Disordered" evidence="2">
    <location>
        <begin position="94"/>
        <end position="116"/>
    </location>
</feature>
<feature type="compositionally biased region" description="Polar residues" evidence="2">
    <location>
        <begin position="94"/>
        <end position="105"/>
    </location>
</feature>
<protein>
    <recommendedName>
        <fullName evidence="1">Integration host factor subunit alpha</fullName>
        <shortName evidence="1">IHF-alpha</shortName>
    </recommendedName>
</protein>
<evidence type="ECO:0000255" key="1">
    <source>
        <dbReference type="HAMAP-Rule" id="MF_00380"/>
    </source>
</evidence>
<evidence type="ECO:0000256" key="2">
    <source>
        <dbReference type="SAM" id="MobiDB-lite"/>
    </source>
</evidence>
<keyword id="KW-0233">DNA recombination</keyword>
<keyword id="KW-0238">DNA-binding</keyword>
<keyword id="KW-1185">Reference proteome</keyword>
<keyword id="KW-0804">Transcription</keyword>
<keyword id="KW-0805">Transcription regulation</keyword>
<keyword id="KW-0810">Translation regulation</keyword>
<gene>
    <name evidence="1" type="primary">ihfA</name>
    <name evidence="1" type="synonym">himA</name>
    <name type="ordered locus">BAV2065</name>
</gene>